<dbReference type="EMBL" id="U00089">
    <property type="protein sequence ID" value="AAB95664.1"/>
    <property type="molecule type" value="Genomic_DNA"/>
</dbReference>
<dbReference type="PIR" id="S73342">
    <property type="entry name" value="S73342"/>
</dbReference>
<dbReference type="RefSeq" id="NP_109826.1">
    <property type="nucleotide sequence ID" value="NC_000912.1"/>
</dbReference>
<dbReference type="RefSeq" id="WP_010874495.1">
    <property type="nucleotide sequence ID" value="NZ_OU342337.1"/>
</dbReference>
<dbReference type="SMR" id="P75260"/>
<dbReference type="STRING" id="272634.MPN_138"/>
<dbReference type="EnsemblBacteria" id="AAB95664">
    <property type="protein sequence ID" value="AAB95664"/>
    <property type="gene ID" value="MPN_138"/>
</dbReference>
<dbReference type="KEGG" id="mpn:MPN_138"/>
<dbReference type="PATRIC" id="fig|272634.6.peg.152"/>
<dbReference type="HOGENOM" id="CLU_137918_0_0_14"/>
<dbReference type="BioCyc" id="MPNE272634:G1GJ3-232-MONOMER"/>
<dbReference type="Proteomes" id="UP000000808">
    <property type="component" value="Chromosome"/>
</dbReference>
<dbReference type="Gene3D" id="1.20.5.170">
    <property type="match status" value="2"/>
</dbReference>
<dbReference type="InterPro" id="IPR002862">
    <property type="entry name" value="DUF16"/>
</dbReference>
<dbReference type="Pfam" id="PF01519">
    <property type="entry name" value="DUF16"/>
    <property type="match status" value="1"/>
</dbReference>
<dbReference type="SUPFAM" id="SSF144266">
    <property type="entry name" value="MPN010-like"/>
    <property type="match status" value="1"/>
</dbReference>
<comment type="similarity">
    <text evidence="1">Belongs to the UPF0134 family.</text>
</comment>
<gene>
    <name type="ordered locus">MPN_138</name>
    <name type="ORF">E07_orf166</name>
    <name type="ORF">MP016</name>
</gene>
<accession>P75260</accession>
<name>Y138_MYCPN</name>
<feature type="chain" id="PRO_0000221599" description="UPF0134 protein MPN_138">
    <location>
        <begin position="1"/>
        <end position="166"/>
    </location>
</feature>
<proteinExistence type="inferred from homology"/>
<reference key="1">
    <citation type="journal article" date="1996" name="Nucleic Acids Res.">
        <title>Complete sequence analysis of the genome of the bacterium Mycoplasma pneumoniae.</title>
        <authorList>
            <person name="Himmelreich R."/>
            <person name="Hilbert H."/>
            <person name="Plagens H."/>
            <person name="Pirkl E."/>
            <person name="Li B.-C."/>
            <person name="Herrmann R."/>
        </authorList>
    </citation>
    <scope>NUCLEOTIDE SEQUENCE [LARGE SCALE GENOMIC DNA]</scope>
    <source>
        <strain>ATCC 29342 / M129 / Subtype 1</strain>
    </source>
</reference>
<protein>
    <recommendedName>
        <fullName>UPF0134 protein MPN_138</fullName>
    </recommendedName>
</protein>
<evidence type="ECO:0000305" key="1"/>
<sequence>MKEKIPFYNEKEFNEMMKKTKKGTFSGWYIINPENKSVEFSGNFNRQFKLNKPVIPVNTEYVTRKEFNEYKDSNDQRLTKIENKVDKLEVKVDKLEEKVDKLEAKVDKLEEKVDKLEAKVDKLEEKVDKLEAKVDSGFEMLAKILAAINKRLDSIEGRLDKIEPPK</sequence>
<organism>
    <name type="scientific">Mycoplasma pneumoniae (strain ATCC 29342 / M129 / Subtype 1)</name>
    <name type="common">Mycoplasmoides pneumoniae</name>
    <dbReference type="NCBI Taxonomy" id="272634"/>
    <lineage>
        <taxon>Bacteria</taxon>
        <taxon>Bacillati</taxon>
        <taxon>Mycoplasmatota</taxon>
        <taxon>Mycoplasmoidales</taxon>
        <taxon>Mycoplasmoidaceae</taxon>
        <taxon>Mycoplasmoides</taxon>
    </lineage>
</organism>
<keyword id="KW-1185">Reference proteome</keyword>